<reference key="1">
    <citation type="journal article" date="1997" name="Nature">
        <title>The complete genome sequence of the gastric pathogen Helicobacter pylori.</title>
        <authorList>
            <person name="Tomb J.-F."/>
            <person name="White O."/>
            <person name="Kerlavage A.R."/>
            <person name="Clayton R.A."/>
            <person name="Sutton G.G."/>
            <person name="Fleischmann R.D."/>
            <person name="Ketchum K.A."/>
            <person name="Klenk H.-P."/>
            <person name="Gill S.R."/>
            <person name="Dougherty B.A."/>
            <person name="Nelson K.E."/>
            <person name="Quackenbush J."/>
            <person name="Zhou L."/>
            <person name="Kirkness E.F."/>
            <person name="Peterson S.N."/>
            <person name="Loftus B.J."/>
            <person name="Richardson D.L."/>
            <person name="Dodson R.J."/>
            <person name="Khalak H.G."/>
            <person name="Glodek A."/>
            <person name="McKenney K."/>
            <person name="FitzGerald L.M."/>
            <person name="Lee N."/>
            <person name="Adams M.D."/>
            <person name="Hickey E.K."/>
            <person name="Berg D.E."/>
            <person name="Gocayne J.D."/>
            <person name="Utterback T.R."/>
            <person name="Peterson J.D."/>
            <person name="Kelley J.M."/>
            <person name="Cotton M.D."/>
            <person name="Weidman J.F."/>
            <person name="Fujii C."/>
            <person name="Bowman C."/>
            <person name="Watthey L."/>
            <person name="Wallin E."/>
            <person name="Hayes W.S."/>
            <person name="Borodovsky M."/>
            <person name="Karp P.D."/>
            <person name="Smith H.O."/>
            <person name="Fraser C.M."/>
            <person name="Venter J.C."/>
        </authorList>
    </citation>
    <scope>NUCLEOTIDE SEQUENCE [LARGE SCALE GENOMIC DNA]</scope>
    <source>
        <strain>ATCC 700392 / 26695</strain>
    </source>
</reference>
<evidence type="ECO:0000255" key="1">
    <source>
        <dbReference type="HAMAP-Rule" id="MF_01345"/>
    </source>
</evidence>
<evidence type="ECO:0000305" key="2"/>
<dbReference type="EMBL" id="AE000511">
    <property type="protein sequence ID" value="AAD08350.1"/>
    <property type="molecule type" value="Genomic_DNA"/>
</dbReference>
<dbReference type="PIR" id="F64683">
    <property type="entry name" value="F64683"/>
</dbReference>
<dbReference type="RefSeq" id="NP_208102.1">
    <property type="nucleotide sequence ID" value="NC_000915.1"/>
</dbReference>
<dbReference type="RefSeq" id="WP_001092746.1">
    <property type="nucleotide sequence ID" value="NC_018939.1"/>
</dbReference>
<dbReference type="SMR" id="P66449"/>
<dbReference type="FunCoup" id="P66449">
    <property type="interactions" value="305"/>
</dbReference>
<dbReference type="STRING" id="85962.HP_1310"/>
<dbReference type="PaxDb" id="85962-C694_06765"/>
<dbReference type="EnsemblBacteria" id="AAD08350">
    <property type="protein sequence ID" value="AAD08350"/>
    <property type="gene ID" value="HP_1310"/>
</dbReference>
<dbReference type="KEGG" id="heo:C694_06765"/>
<dbReference type="KEGG" id="hpy:HP_1310"/>
<dbReference type="PATRIC" id="fig|85962.47.peg.1404"/>
<dbReference type="eggNOG" id="COG0186">
    <property type="taxonomic scope" value="Bacteria"/>
</dbReference>
<dbReference type="InParanoid" id="P66449"/>
<dbReference type="OrthoDB" id="9811714at2"/>
<dbReference type="PhylomeDB" id="P66449"/>
<dbReference type="Proteomes" id="UP000000429">
    <property type="component" value="Chromosome"/>
</dbReference>
<dbReference type="GO" id="GO:0022627">
    <property type="term" value="C:cytosolic small ribosomal subunit"/>
    <property type="evidence" value="ECO:0000318"/>
    <property type="project" value="GO_Central"/>
</dbReference>
<dbReference type="GO" id="GO:0019843">
    <property type="term" value="F:rRNA binding"/>
    <property type="evidence" value="ECO:0007669"/>
    <property type="project" value="UniProtKB-UniRule"/>
</dbReference>
<dbReference type="GO" id="GO:0003735">
    <property type="term" value="F:structural constituent of ribosome"/>
    <property type="evidence" value="ECO:0000318"/>
    <property type="project" value="GO_Central"/>
</dbReference>
<dbReference type="GO" id="GO:0006412">
    <property type="term" value="P:translation"/>
    <property type="evidence" value="ECO:0007669"/>
    <property type="project" value="UniProtKB-UniRule"/>
</dbReference>
<dbReference type="CDD" id="cd00364">
    <property type="entry name" value="Ribosomal_uS17"/>
    <property type="match status" value="1"/>
</dbReference>
<dbReference type="FunFam" id="2.40.50.140:FF:000108">
    <property type="entry name" value="30S ribosomal protein S17"/>
    <property type="match status" value="1"/>
</dbReference>
<dbReference type="Gene3D" id="2.40.50.140">
    <property type="entry name" value="Nucleic acid-binding proteins"/>
    <property type="match status" value="1"/>
</dbReference>
<dbReference type="HAMAP" id="MF_01345_B">
    <property type="entry name" value="Ribosomal_uS17_B"/>
    <property type="match status" value="1"/>
</dbReference>
<dbReference type="InterPro" id="IPR012340">
    <property type="entry name" value="NA-bd_OB-fold"/>
</dbReference>
<dbReference type="InterPro" id="IPR000266">
    <property type="entry name" value="Ribosomal_uS17"/>
</dbReference>
<dbReference type="InterPro" id="IPR019984">
    <property type="entry name" value="Ribosomal_uS17_bact/chlr"/>
</dbReference>
<dbReference type="InterPro" id="IPR019979">
    <property type="entry name" value="Ribosomal_uS17_CS"/>
</dbReference>
<dbReference type="NCBIfam" id="NF004123">
    <property type="entry name" value="PRK05610.1"/>
    <property type="match status" value="1"/>
</dbReference>
<dbReference type="NCBIfam" id="TIGR03635">
    <property type="entry name" value="uS17_bact"/>
    <property type="match status" value="1"/>
</dbReference>
<dbReference type="PANTHER" id="PTHR10744">
    <property type="entry name" value="40S RIBOSOMAL PROTEIN S11 FAMILY MEMBER"/>
    <property type="match status" value="1"/>
</dbReference>
<dbReference type="PANTHER" id="PTHR10744:SF1">
    <property type="entry name" value="SMALL RIBOSOMAL SUBUNIT PROTEIN US17M"/>
    <property type="match status" value="1"/>
</dbReference>
<dbReference type="Pfam" id="PF00366">
    <property type="entry name" value="Ribosomal_S17"/>
    <property type="match status" value="1"/>
</dbReference>
<dbReference type="PRINTS" id="PR00973">
    <property type="entry name" value="RIBOSOMALS17"/>
</dbReference>
<dbReference type="SUPFAM" id="SSF50249">
    <property type="entry name" value="Nucleic acid-binding proteins"/>
    <property type="match status" value="1"/>
</dbReference>
<dbReference type="PROSITE" id="PS00056">
    <property type="entry name" value="RIBOSOMAL_S17"/>
    <property type="match status" value="1"/>
</dbReference>
<protein>
    <recommendedName>
        <fullName evidence="1">Small ribosomal subunit protein uS17</fullName>
    </recommendedName>
    <alternativeName>
        <fullName evidence="2">30S ribosomal protein S17</fullName>
    </alternativeName>
</protein>
<comment type="function">
    <text evidence="1">One of the primary rRNA binding proteins, it binds specifically to the 5'-end of 16S ribosomal RNA.</text>
</comment>
<comment type="subunit">
    <text evidence="1">Part of the 30S ribosomal subunit.</text>
</comment>
<comment type="similarity">
    <text evidence="1">Belongs to the universal ribosomal protein uS17 family.</text>
</comment>
<gene>
    <name evidence="1" type="primary">rpsQ</name>
    <name type="ordered locus">HP_1310</name>
</gene>
<keyword id="KW-1185">Reference proteome</keyword>
<keyword id="KW-0687">Ribonucleoprotein</keyword>
<keyword id="KW-0689">Ribosomal protein</keyword>
<keyword id="KW-0694">RNA-binding</keyword>
<keyword id="KW-0699">rRNA-binding</keyword>
<proteinExistence type="inferred from homology"/>
<feature type="chain" id="PRO_0000128461" description="Small ribosomal subunit protein uS17">
    <location>
        <begin position="1"/>
        <end position="86"/>
    </location>
</feature>
<name>RS17_HELPY</name>
<accession>P66449</accession>
<accession>P56024</accession>
<organism>
    <name type="scientific">Helicobacter pylori (strain ATCC 700392 / 26695)</name>
    <name type="common">Campylobacter pylori</name>
    <dbReference type="NCBI Taxonomy" id="85962"/>
    <lineage>
        <taxon>Bacteria</taxon>
        <taxon>Pseudomonadati</taxon>
        <taxon>Campylobacterota</taxon>
        <taxon>Epsilonproteobacteria</taxon>
        <taxon>Campylobacterales</taxon>
        <taxon>Helicobacteraceae</taxon>
        <taxon>Helicobacter</taxon>
    </lineage>
</organism>
<sequence>MNTKEPHKRLVQGKVISKFAEKSAVILVERKVVHEKYRKIVKKFKKYTIHDENNQVKVGDFVSAIECRPLSKTKSFTLKEILVVGV</sequence>